<name>CMAH_GORGO</name>
<evidence type="ECO:0000250" key="1"/>
<evidence type="ECO:0000250" key="2">
    <source>
        <dbReference type="UniProtKB" id="Q61419"/>
    </source>
</evidence>
<evidence type="ECO:0000255" key="3">
    <source>
        <dbReference type="PROSITE-ProRule" id="PRU00628"/>
    </source>
</evidence>
<evidence type="ECO:0000305" key="4"/>
<comment type="function">
    <text evidence="2">Sialic acids are components of carbohydrate chains of glycoconjugates and are involved in cell-cell recognition and cell-pathogen interactions. Catalyzes the conversion of CMP-N-acetylneuraminic acid (CMP-Neu5Ac) into its hydroxylated derivative CMP-N-glycolylneuraminic acid (CMP-Neu5Gc), a sialic acid abundantly expressed at the surface of many cells.</text>
</comment>
<comment type="catalytic activity">
    <reaction>
        <text>CMP-N-acetyl-beta-neuraminate + 2 Fe(II)-[cytochrome b5] + O2 + 2 H(+) = CMP-N-glycoloyl-beta-neuraminate + 2 Fe(III)-[cytochrome b5] + H2O</text>
        <dbReference type="Rhea" id="RHEA:16145"/>
        <dbReference type="Rhea" id="RHEA-COMP:10438"/>
        <dbReference type="Rhea" id="RHEA-COMP:10439"/>
        <dbReference type="ChEBI" id="CHEBI:15377"/>
        <dbReference type="ChEBI" id="CHEBI:15378"/>
        <dbReference type="ChEBI" id="CHEBI:15379"/>
        <dbReference type="ChEBI" id="CHEBI:29033"/>
        <dbReference type="ChEBI" id="CHEBI:29034"/>
        <dbReference type="ChEBI" id="CHEBI:57812"/>
        <dbReference type="ChEBI" id="CHEBI:58376"/>
        <dbReference type="EC" id="1.14.18.2"/>
    </reaction>
</comment>
<comment type="cofactor">
    <cofactor evidence="3">
        <name>[2Fe-2S] cluster</name>
        <dbReference type="ChEBI" id="CHEBI:190135"/>
    </cofactor>
    <text evidence="3">Binds 1 [2Fe-2S] cluster per subunit.</text>
</comment>
<comment type="pathway">
    <text>Amino-sugar metabolism; N-acetylneuraminate metabolism.</text>
</comment>
<comment type="subcellular location">
    <subcellularLocation>
        <location evidence="1">Cytoplasm</location>
    </subcellularLocation>
</comment>
<comment type="similarity">
    <text evidence="4">Belongs to the CMP-Neu5Ac hydroxylase family.</text>
</comment>
<gene>
    <name type="primary">CMAH</name>
</gene>
<feature type="chain" id="PRO_0000127800" description="Cytidine monophosphate-N-acetylneuraminic acid hydroxylase">
    <location>
        <begin position="1" status="less than"/>
        <end position="600"/>
    </location>
</feature>
<feature type="domain" description="Rieske" evidence="3">
    <location>
        <begin position="9"/>
        <end position="107"/>
    </location>
</feature>
<feature type="binding site" evidence="3">
    <location>
        <position position="49"/>
    </location>
    <ligand>
        <name>[2Fe-2S] cluster</name>
        <dbReference type="ChEBI" id="CHEBI:190135"/>
    </ligand>
</feature>
<feature type="binding site" evidence="3">
    <location>
        <position position="51"/>
    </location>
    <ligand>
        <name>[2Fe-2S] cluster</name>
        <dbReference type="ChEBI" id="CHEBI:190135"/>
    </ligand>
</feature>
<feature type="binding site" evidence="3">
    <location>
        <position position="70"/>
    </location>
    <ligand>
        <name>[2Fe-2S] cluster</name>
        <dbReference type="ChEBI" id="CHEBI:190135"/>
    </ligand>
</feature>
<feature type="binding site" evidence="3">
    <location>
        <position position="73"/>
    </location>
    <ligand>
        <name>[2Fe-2S] cluster</name>
        <dbReference type="ChEBI" id="CHEBI:190135"/>
    </ligand>
</feature>
<feature type="sequence conflict" description="In Ref. 1; AAN05317." evidence="4" ref="1">
    <original>D</original>
    <variation>V</variation>
    <location>
        <position position="118"/>
    </location>
</feature>
<feature type="sequence conflict" description="In Ref. 2; AAL56239." evidence="4" ref="2">
    <original>E</original>
    <variation>K</variation>
    <location>
        <position position="330"/>
    </location>
</feature>
<feature type="sequence conflict" description="In Ref. 2; AAL56239." evidence="4" ref="2">
    <original>QPR</original>
    <variation>HPP</variation>
    <location>
        <begin position="346"/>
        <end position="348"/>
    </location>
</feature>
<feature type="non-terminal residue">
    <location>
        <position position="1"/>
    </location>
</feature>
<dbReference type="EC" id="1.14.18.2"/>
<dbReference type="EMBL" id="AF494222">
    <property type="protein sequence ID" value="AAN05317.1"/>
    <property type="molecule type" value="mRNA"/>
</dbReference>
<dbReference type="EMBL" id="AF494223">
    <property type="protein sequence ID" value="AAN05318.1"/>
    <property type="molecule type" value="mRNA"/>
</dbReference>
<dbReference type="EMBL" id="AF354635">
    <property type="protein sequence ID" value="AAL56239.1"/>
    <property type="molecule type" value="mRNA"/>
</dbReference>
<dbReference type="FunCoup" id="Q8MJC8">
    <property type="interactions" value="252"/>
</dbReference>
<dbReference type="STRING" id="9593.ENSGGOP00000024060"/>
<dbReference type="eggNOG" id="ENOG502QR0M">
    <property type="taxonomic scope" value="Eukaryota"/>
</dbReference>
<dbReference type="InParanoid" id="Q8MJC8"/>
<dbReference type="UniPathway" id="UPA00628"/>
<dbReference type="Proteomes" id="UP000001519">
    <property type="component" value="Unplaced"/>
</dbReference>
<dbReference type="GO" id="GO:0005737">
    <property type="term" value="C:cytoplasm"/>
    <property type="evidence" value="ECO:0000318"/>
    <property type="project" value="GO_Central"/>
</dbReference>
<dbReference type="GO" id="GO:0051537">
    <property type="term" value="F:2 iron, 2 sulfur cluster binding"/>
    <property type="evidence" value="ECO:0007669"/>
    <property type="project" value="UniProtKB-KW"/>
</dbReference>
<dbReference type="GO" id="GO:0030338">
    <property type="term" value="F:CMP-N-acetylneuraminate monooxygenase activity"/>
    <property type="evidence" value="ECO:0000318"/>
    <property type="project" value="GO_Central"/>
</dbReference>
<dbReference type="GO" id="GO:0046872">
    <property type="term" value="F:metal ion binding"/>
    <property type="evidence" value="ECO:0007669"/>
    <property type="project" value="UniProtKB-KW"/>
</dbReference>
<dbReference type="GO" id="GO:0046381">
    <property type="term" value="P:CMP-N-acetylneuraminate metabolic process"/>
    <property type="evidence" value="ECO:0000318"/>
    <property type="project" value="GO_Central"/>
</dbReference>
<dbReference type="GO" id="GO:0006054">
    <property type="term" value="P:N-acetylneuraminate metabolic process"/>
    <property type="evidence" value="ECO:0007669"/>
    <property type="project" value="UniProtKB-UniPathway"/>
</dbReference>
<dbReference type="CDD" id="cd03473">
    <property type="entry name" value="Rieske_CMP_Neu5Ac_hydrolase_N"/>
    <property type="match status" value="1"/>
</dbReference>
<dbReference type="FunFam" id="3.60.15.10:FF:000025">
    <property type="entry name" value="Inactive cytidine monophosphate-N-acetylneuraminic acid hydroxylase"/>
    <property type="match status" value="1"/>
</dbReference>
<dbReference type="Gene3D" id="3.60.15.10">
    <property type="entry name" value="Ribonuclease Z/Hydroxyacylglutathione hydrolase-like"/>
    <property type="match status" value="1"/>
</dbReference>
<dbReference type="Gene3D" id="2.102.10.10">
    <property type="entry name" value="Rieske [2Fe-2S] iron-sulphur domain"/>
    <property type="match status" value="1"/>
</dbReference>
<dbReference type="InterPro" id="IPR037339">
    <property type="entry name" value="CMP-Neu5Ac_hydroxylase_Rieske"/>
</dbReference>
<dbReference type="InterPro" id="IPR027033">
    <property type="entry name" value="Cnh"/>
</dbReference>
<dbReference type="InterPro" id="IPR036866">
    <property type="entry name" value="RibonucZ/Hydroxyglut_hydro"/>
</dbReference>
<dbReference type="InterPro" id="IPR017941">
    <property type="entry name" value="Rieske_2Fe-2S"/>
</dbReference>
<dbReference type="InterPro" id="IPR036922">
    <property type="entry name" value="Rieske_2Fe-2S_sf"/>
</dbReference>
<dbReference type="PANTHER" id="PTHR46522">
    <property type="entry name" value="CYTIDINE MONOPHOSPHATE-N-ACETYLNEURAMINIC ACID HYDROXYLASE"/>
    <property type="match status" value="1"/>
</dbReference>
<dbReference type="PANTHER" id="PTHR46522:SF1">
    <property type="entry name" value="INACTIVE CYTIDINE MONOPHOSPHATE-N-ACETYLNEURAMINIC ACID HYDROXYLASE"/>
    <property type="match status" value="1"/>
</dbReference>
<dbReference type="Pfam" id="PF13483">
    <property type="entry name" value="Lactamase_B_3"/>
    <property type="match status" value="1"/>
</dbReference>
<dbReference type="Pfam" id="PF00355">
    <property type="entry name" value="Rieske"/>
    <property type="match status" value="1"/>
</dbReference>
<dbReference type="SUPFAM" id="SSF50022">
    <property type="entry name" value="ISP domain"/>
    <property type="match status" value="1"/>
</dbReference>
<dbReference type="SUPFAM" id="SSF56281">
    <property type="entry name" value="Metallo-hydrolase/oxidoreductase"/>
    <property type="match status" value="1"/>
</dbReference>
<dbReference type="PROSITE" id="PS51296">
    <property type="entry name" value="RIESKE"/>
    <property type="match status" value="1"/>
</dbReference>
<accession>Q8MJC8</accession>
<accession>Q8MJC9</accession>
<accession>Q8WNM3</accession>
<keyword id="KW-0001">2Fe-2S</keyword>
<keyword id="KW-0963">Cytoplasm</keyword>
<keyword id="KW-0249">Electron transport</keyword>
<keyword id="KW-0408">Iron</keyword>
<keyword id="KW-0411">Iron-sulfur</keyword>
<keyword id="KW-0479">Metal-binding</keyword>
<keyword id="KW-0560">Oxidoreductase</keyword>
<keyword id="KW-1185">Reference proteome</keyword>
<keyword id="KW-0813">Transport</keyword>
<proteinExistence type="evidence at transcript level"/>
<sequence>QTTEILLCLSPVEVASLKEGINFFRNKSTGKDYILYKNKSRLRACKNMCKHQGGLFIKDIEDLAGRSVRCTKHNWKLDVSTMKYINPPESFCQDELVVEMDENNRLLLLELNPPNPWDLQPRSPEELAFGEVQITYLTHACMDLKLGDKRMVFDPWLIGPAFARGWWLLHEPPSDWLERLCQADLIYISHLHSDHLSYPTLKKLAGRRPDIPIYVGNTERPVFWNLNQSGVQLTNINVMPFGIWQQVDKNLRFMILMDGVHPEMDTCIIVEYKGHKILNTVDCTRPNGGRLPMKVALMMSDFAGGASGFPMTFSGGKFTEEWKAQFIKTERKKLLNYKARLVKNLQPRIYCPFAGYFVESHPSDKYIKETNTKNDPNELNNLIKKNSDVITWTPRPGATLDLGRMLKDPTDSKGIIEPPEGTKIYKDSWDFEPYLEILNAAVGDEIFLHSSWIKEYFTWAGFKDYNLVVRMIETDEDFNPFPGGYDYLVDFLDLSFPKERPQREHPYEEIHSRVDVIRHVVKNGLLWDELYIGFQTRLQRDPDIYHHLFWNHFQIKLPLTPPNWKSFLMCCEQNGPGILQFSTERTNEPNRNKFSVENKA</sequence>
<reference key="1">
    <citation type="journal article" date="2002" name="Proc. Natl. Acad. Sci. U.S.A.">
        <title>Inactivation of CMP-N-acetylneuraminic acid hydroxylase occurred prior to brain expansion during human evolution.</title>
        <authorList>
            <person name="Chou H.-H."/>
            <person name="Hayakawa T."/>
            <person name="Diaz S."/>
            <person name="Krings M."/>
            <person name="Indriati E."/>
            <person name="Leakey M."/>
            <person name="Paabo S."/>
            <person name="Satta Y."/>
            <person name="Takahata N."/>
            <person name="Varki A."/>
        </authorList>
    </citation>
    <scope>NUCLEOTIDE SEQUENCE [MRNA]</scope>
</reference>
<reference key="2">
    <citation type="journal article" date="2001" name="J. Hered.">
        <title>Human and ape molecular clocks and constraints on paleontological hypotheses.</title>
        <authorList>
            <person name="Stauffer R.L."/>
            <person name="Walker A."/>
            <person name="Ryder O.A."/>
            <person name="Lyons-Weiler M."/>
            <person name="Hedges S.B."/>
        </authorList>
    </citation>
    <scope>NUCLEOTIDE SEQUENCE [MRNA] OF 11-348</scope>
</reference>
<protein>
    <recommendedName>
        <fullName>Cytidine monophosphate-N-acetylneuraminic acid hydroxylase</fullName>
        <shortName>CMP-N-acetylneuraminic acid hydroxylase</shortName>
        <ecNumber>1.14.18.2</ecNumber>
    </recommendedName>
    <alternativeName>
        <fullName>CMP-N-acetylneuraminate monooxygenase</fullName>
    </alternativeName>
    <alternativeName>
        <fullName>CMP-Neu5Ac hydroxylase</fullName>
    </alternativeName>
    <alternativeName>
        <fullName>CMP-NeuAc hydroxylase</fullName>
    </alternativeName>
</protein>
<organism>
    <name type="scientific">Gorilla gorilla gorilla</name>
    <name type="common">Western lowland gorilla</name>
    <dbReference type="NCBI Taxonomy" id="9595"/>
    <lineage>
        <taxon>Eukaryota</taxon>
        <taxon>Metazoa</taxon>
        <taxon>Chordata</taxon>
        <taxon>Craniata</taxon>
        <taxon>Vertebrata</taxon>
        <taxon>Euteleostomi</taxon>
        <taxon>Mammalia</taxon>
        <taxon>Eutheria</taxon>
        <taxon>Euarchontoglires</taxon>
        <taxon>Primates</taxon>
        <taxon>Haplorrhini</taxon>
        <taxon>Catarrhini</taxon>
        <taxon>Hominidae</taxon>
        <taxon>Gorilla</taxon>
    </lineage>
</organism>